<comment type="function">
    <text evidence="1">Involved in trafficking and recycling of synaptic vesicles.</text>
</comment>
<comment type="subcellular location">
    <subcellularLocation>
        <location evidence="4">Membrane</location>
        <topology evidence="4">Multi-pass membrane protein</topology>
    </subcellularLocation>
    <subcellularLocation>
        <location evidence="3">Cytoplasmic vesicle</location>
        <location evidence="3">Secretory vesicle</location>
        <location evidence="3">Synaptic vesicle</location>
    </subcellularLocation>
    <subcellularLocation>
        <location evidence="1">Golgi apparatus</location>
        <location evidence="1">trans-Golgi network</location>
    </subcellularLocation>
    <subcellularLocation>
        <location evidence="1">Early endosome</location>
    </subcellularLocation>
    <subcellularLocation>
        <location evidence="1">Recycling endosome</location>
    </subcellularLocation>
    <subcellularLocation>
        <location evidence="1">Late endosome</location>
    </subcellularLocation>
    <subcellularLocation>
        <location evidence="1">Cytoplasmic vesicle</location>
        <location evidence="1">Autophagosome</location>
    </subcellularLocation>
</comment>
<comment type="tissue specificity">
    <text evidence="3">Widely expressed, including dopaminergic neurons in the substantia nigra.</text>
</comment>
<comment type="similarity">
    <text evidence="4">Belongs to the TMEM134/TMEM230 family.</text>
</comment>
<sequence length="120" mass="13188">MMPSRTNLATGLPSSKVKYSRLASTDDGYIDLQFKKSPPKIPYKAIALATVLFLIGTFLIIIGSLLLSGYISKGGADRAVPVLIIGILVFLPGFYHLRIAYYASKGYRGYSYDDIPDFDD</sequence>
<accession>Q8CIB6</accession>
<accession>Q9CYF7</accession>
<feature type="chain" id="PRO_0000233893" description="Transmembrane protein 230">
    <location>
        <begin position="1"/>
        <end position="120"/>
    </location>
</feature>
<feature type="transmembrane region" description="Helical" evidence="2">
    <location>
        <begin position="46"/>
        <end position="66"/>
    </location>
</feature>
<feature type="transmembrane region" description="Helical" evidence="2">
    <location>
        <begin position="79"/>
        <end position="99"/>
    </location>
</feature>
<feature type="modified residue" description="Phosphoserine" evidence="1">
    <location>
        <position position="15"/>
    </location>
</feature>
<feature type="modified residue" description="Phosphoserine" evidence="5 6 7">
    <location>
        <position position="24"/>
    </location>
</feature>
<feature type="sequence conflict" description="In Ref. 1; BAB30900." evidence="4" ref="1">
    <original>G</original>
    <variation>R</variation>
    <location>
        <position position="86"/>
    </location>
</feature>
<gene>
    <name type="primary">Tmem230</name>
</gene>
<dbReference type="EMBL" id="AK170062">
    <property type="protein sequence ID" value="BAE41540.1"/>
    <property type="molecule type" value="mRNA"/>
</dbReference>
<dbReference type="EMBL" id="AK017729">
    <property type="protein sequence ID" value="BAB30900.1"/>
    <property type="molecule type" value="mRNA"/>
</dbReference>
<dbReference type="EMBL" id="BC033429">
    <property type="protein sequence ID" value="AAH33429.1"/>
    <property type="molecule type" value="mRNA"/>
</dbReference>
<dbReference type="CCDS" id="CCDS16770.1"/>
<dbReference type="RefSeq" id="NP_001135443.1">
    <property type="nucleotide sequence ID" value="NM_001141971.1"/>
</dbReference>
<dbReference type="RefSeq" id="NP_081754.2">
    <property type="nucleotide sequence ID" value="NM_027478.3"/>
</dbReference>
<dbReference type="RefSeq" id="XP_006500229.1">
    <property type="nucleotide sequence ID" value="XM_006500166.5"/>
</dbReference>
<dbReference type="BioGRID" id="214165">
    <property type="interactions" value="1"/>
</dbReference>
<dbReference type="FunCoup" id="Q8CIB6">
    <property type="interactions" value="2244"/>
</dbReference>
<dbReference type="STRING" id="10090.ENSMUSP00000105793"/>
<dbReference type="iPTMnet" id="Q8CIB6"/>
<dbReference type="PhosphoSitePlus" id="Q8CIB6"/>
<dbReference type="SwissPalm" id="Q8CIB6"/>
<dbReference type="jPOST" id="Q8CIB6"/>
<dbReference type="PaxDb" id="10090-ENSMUSP00000028816"/>
<dbReference type="PeptideAtlas" id="Q8CIB6"/>
<dbReference type="ProteomicsDB" id="260688"/>
<dbReference type="Pumba" id="Q8CIB6"/>
<dbReference type="TopDownProteomics" id="Q8CIB6"/>
<dbReference type="Antibodypedia" id="2275">
    <property type="antibodies" value="190 antibodies from 23 providers"/>
</dbReference>
<dbReference type="DNASU" id="70612"/>
<dbReference type="Ensembl" id="ENSMUST00000028816.9">
    <property type="protein sequence ID" value="ENSMUSP00000028816.3"/>
    <property type="gene ID" value="ENSMUSG00000027341.11"/>
</dbReference>
<dbReference type="Ensembl" id="ENSMUST00000110163.8">
    <property type="protein sequence ID" value="ENSMUSP00000105792.2"/>
    <property type="gene ID" value="ENSMUSG00000027341.11"/>
</dbReference>
<dbReference type="Ensembl" id="ENSMUST00000110164.8">
    <property type="protein sequence ID" value="ENSMUSP00000105793.2"/>
    <property type="gene ID" value="ENSMUSG00000027341.11"/>
</dbReference>
<dbReference type="Ensembl" id="ENSMUST00000180286.2">
    <property type="protein sequence ID" value="ENSMUSP00000136826.2"/>
    <property type="gene ID" value="ENSMUSG00000027341.11"/>
</dbReference>
<dbReference type="GeneID" id="70612"/>
<dbReference type="KEGG" id="mmu:70612"/>
<dbReference type="UCSC" id="uc008mmk.2">
    <property type="organism name" value="mouse"/>
</dbReference>
<dbReference type="AGR" id="MGI:1917862"/>
<dbReference type="CTD" id="29058"/>
<dbReference type="MGI" id="MGI:1917862">
    <property type="gene designation" value="Tmem230"/>
</dbReference>
<dbReference type="VEuPathDB" id="HostDB:ENSMUSG00000027341"/>
<dbReference type="eggNOG" id="KOG4753">
    <property type="taxonomic scope" value="Eukaryota"/>
</dbReference>
<dbReference type="GeneTree" id="ENSGT00390000008694"/>
<dbReference type="HOGENOM" id="CLU_126638_1_0_1"/>
<dbReference type="InParanoid" id="Q8CIB6"/>
<dbReference type="OMA" id="AYYAYYK"/>
<dbReference type="OrthoDB" id="5597044at2759"/>
<dbReference type="PhylomeDB" id="Q8CIB6"/>
<dbReference type="TreeFam" id="TF329240"/>
<dbReference type="BioGRID-ORCS" id="70612">
    <property type="hits" value="5 hits in 76 CRISPR screens"/>
</dbReference>
<dbReference type="ChiTaRS" id="Tmem230">
    <property type="organism name" value="mouse"/>
</dbReference>
<dbReference type="PRO" id="PR:Q8CIB6"/>
<dbReference type="Proteomes" id="UP000000589">
    <property type="component" value="Chromosome 2"/>
</dbReference>
<dbReference type="RNAct" id="Q8CIB6">
    <property type="molecule type" value="protein"/>
</dbReference>
<dbReference type="Bgee" id="ENSMUSG00000027341">
    <property type="expression patterns" value="Expressed in spermatocyte and 64 other cell types or tissues"/>
</dbReference>
<dbReference type="GO" id="GO:0005776">
    <property type="term" value="C:autophagosome"/>
    <property type="evidence" value="ECO:0007669"/>
    <property type="project" value="UniProtKB-SubCell"/>
</dbReference>
<dbReference type="GO" id="GO:0030424">
    <property type="term" value="C:axon"/>
    <property type="evidence" value="ECO:0007669"/>
    <property type="project" value="GOC"/>
</dbReference>
<dbReference type="GO" id="GO:0005769">
    <property type="term" value="C:early endosome"/>
    <property type="evidence" value="ECO:0000250"/>
    <property type="project" value="UniProtKB"/>
</dbReference>
<dbReference type="GO" id="GO:0005783">
    <property type="term" value="C:endoplasmic reticulum"/>
    <property type="evidence" value="ECO:0007669"/>
    <property type="project" value="Ensembl"/>
</dbReference>
<dbReference type="GO" id="GO:0005770">
    <property type="term" value="C:late endosome"/>
    <property type="evidence" value="ECO:0000250"/>
    <property type="project" value="UniProtKB"/>
</dbReference>
<dbReference type="GO" id="GO:0016020">
    <property type="term" value="C:membrane"/>
    <property type="evidence" value="ECO:0007669"/>
    <property type="project" value="UniProtKB-SubCell"/>
</dbReference>
<dbReference type="GO" id="GO:0055037">
    <property type="term" value="C:recycling endosome"/>
    <property type="evidence" value="ECO:0000250"/>
    <property type="project" value="UniProtKB"/>
</dbReference>
<dbReference type="GO" id="GO:0008021">
    <property type="term" value="C:synaptic vesicle"/>
    <property type="evidence" value="ECO:0000250"/>
    <property type="project" value="UniProtKB"/>
</dbReference>
<dbReference type="GO" id="GO:0005802">
    <property type="term" value="C:trans-Golgi network"/>
    <property type="evidence" value="ECO:0000250"/>
    <property type="project" value="UniProtKB"/>
</dbReference>
<dbReference type="GO" id="GO:0098930">
    <property type="term" value="P:axonal transport"/>
    <property type="evidence" value="ECO:0007669"/>
    <property type="project" value="Ensembl"/>
</dbReference>
<dbReference type="GO" id="GO:0048489">
    <property type="term" value="P:synaptic vesicle transport"/>
    <property type="evidence" value="ECO:0000250"/>
    <property type="project" value="UniProtKB"/>
</dbReference>
<dbReference type="InterPro" id="IPR044234">
    <property type="entry name" value="TMEM230"/>
</dbReference>
<dbReference type="InterPro" id="IPR008590">
    <property type="entry name" value="TMEM_230/134"/>
</dbReference>
<dbReference type="PANTHER" id="PTHR15664">
    <property type="entry name" value="C20ORF30 PROTEIN"/>
    <property type="match status" value="1"/>
</dbReference>
<dbReference type="PANTHER" id="PTHR15664:SF6">
    <property type="entry name" value="TRANSMEMBRANE PROTEIN 230"/>
    <property type="match status" value="1"/>
</dbReference>
<dbReference type="Pfam" id="PF05915">
    <property type="entry name" value="TMEM_230_134"/>
    <property type="match status" value="1"/>
</dbReference>
<evidence type="ECO:0000250" key="1">
    <source>
        <dbReference type="UniProtKB" id="Q96A57"/>
    </source>
</evidence>
<evidence type="ECO:0000255" key="2"/>
<evidence type="ECO:0000269" key="3">
    <source>
    </source>
</evidence>
<evidence type="ECO:0000305" key="4"/>
<evidence type="ECO:0007744" key="5">
    <source>
    </source>
</evidence>
<evidence type="ECO:0007744" key="6">
    <source>
    </source>
</evidence>
<evidence type="ECO:0007744" key="7">
    <source>
    </source>
</evidence>
<name>TM230_MOUSE</name>
<protein>
    <recommendedName>
        <fullName>Transmembrane protein 230</fullName>
    </recommendedName>
</protein>
<organism>
    <name type="scientific">Mus musculus</name>
    <name type="common">Mouse</name>
    <dbReference type="NCBI Taxonomy" id="10090"/>
    <lineage>
        <taxon>Eukaryota</taxon>
        <taxon>Metazoa</taxon>
        <taxon>Chordata</taxon>
        <taxon>Craniata</taxon>
        <taxon>Vertebrata</taxon>
        <taxon>Euteleostomi</taxon>
        <taxon>Mammalia</taxon>
        <taxon>Eutheria</taxon>
        <taxon>Euarchontoglires</taxon>
        <taxon>Glires</taxon>
        <taxon>Rodentia</taxon>
        <taxon>Myomorpha</taxon>
        <taxon>Muroidea</taxon>
        <taxon>Muridae</taxon>
        <taxon>Murinae</taxon>
        <taxon>Mus</taxon>
        <taxon>Mus</taxon>
    </lineage>
</organism>
<proteinExistence type="evidence at protein level"/>
<keyword id="KW-0968">Cytoplasmic vesicle</keyword>
<keyword id="KW-0967">Endosome</keyword>
<keyword id="KW-0333">Golgi apparatus</keyword>
<keyword id="KW-0472">Membrane</keyword>
<keyword id="KW-0597">Phosphoprotein</keyword>
<keyword id="KW-1185">Reference proteome</keyword>
<keyword id="KW-0770">Synapse</keyword>
<keyword id="KW-0812">Transmembrane</keyword>
<keyword id="KW-1133">Transmembrane helix</keyword>
<reference key="1">
    <citation type="journal article" date="2005" name="Science">
        <title>The transcriptional landscape of the mammalian genome.</title>
        <authorList>
            <person name="Carninci P."/>
            <person name="Kasukawa T."/>
            <person name="Katayama S."/>
            <person name="Gough J."/>
            <person name="Frith M.C."/>
            <person name="Maeda N."/>
            <person name="Oyama R."/>
            <person name="Ravasi T."/>
            <person name="Lenhard B."/>
            <person name="Wells C."/>
            <person name="Kodzius R."/>
            <person name="Shimokawa K."/>
            <person name="Bajic V.B."/>
            <person name="Brenner S.E."/>
            <person name="Batalov S."/>
            <person name="Forrest A.R."/>
            <person name="Zavolan M."/>
            <person name="Davis M.J."/>
            <person name="Wilming L.G."/>
            <person name="Aidinis V."/>
            <person name="Allen J.E."/>
            <person name="Ambesi-Impiombato A."/>
            <person name="Apweiler R."/>
            <person name="Aturaliya R.N."/>
            <person name="Bailey T.L."/>
            <person name="Bansal M."/>
            <person name="Baxter L."/>
            <person name="Beisel K.W."/>
            <person name="Bersano T."/>
            <person name="Bono H."/>
            <person name="Chalk A.M."/>
            <person name="Chiu K.P."/>
            <person name="Choudhary V."/>
            <person name="Christoffels A."/>
            <person name="Clutterbuck D.R."/>
            <person name="Crowe M.L."/>
            <person name="Dalla E."/>
            <person name="Dalrymple B.P."/>
            <person name="de Bono B."/>
            <person name="Della Gatta G."/>
            <person name="di Bernardo D."/>
            <person name="Down T."/>
            <person name="Engstrom P."/>
            <person name="Fagiolini M."/>
            <person name="Faulkner G."/>
            <person name="Fletcher C.F."/>
            <person name="Fukushima T."/>
            <person name="Furuno M."/>
            <person name="Futaki S."/>
            <person name="Gariboldi M."/>
            <person name="Georgii-Hemming P."/>
            <person name="Gingeras T.R."/>
            <person name="Gojobori T."/>
            <person name="Green R.E."/>
            <person name="Gustincich S."/>
            <person name="Harbers M."/>
            <person name="Hayashi Y."/>
            <person name="Hensch T.K."/>
            <person name="Hirokawa N."/>
            <person name="Hill D."/>
            <person name="Huminiecki L."/>
            <person name="Iacono M."/>
            <person name="Ikeo K."/>
            <person name="Iwama A."/>
            <person name="Ishikawa T."/>
            <person name="Jakt M."/>
            <person name="Kanapin A."/>
            <person name="Katoh M."/>
            <person name="Kawasawa Y."/>
            <person name="Kelso J."/>
            <person name="Kitamura H."/>
            <person name="Kitano H."/>
            <person name="Kollias G."/>
            <person name="Krishnan S.P."/>
            <person name="Kruger A."/>
            <person name="Kummerfeld S.K."/>
            <person name="Kurochkin I.V."/>
            <person name="Lareau L.F."/>
            <person name="Lazarevic D."/>
            <person name="Lipovich L."/>
            <person name="Liu J."/>
            <person name="Liuni S."/>
            <person name="McWilliam S."/>
            <person name="Madan Babu M."/>
            <person name="Madera M."/>
            <person name="Marchionni L."/>
            <person name="Matsuda H."/>
            <person name="Matsuzawa S."/>
            <person name="Miki H."/>
            <person name="Mignone F."/>
            <person name="Miyake S."/>
            <person name="Morris K."/>
            <person name="Mottagui-Tabar S."/>
            <person name="Mulder N."/>
            <person name="Nakano N."/>
            <person name="Nakauchi H."/>
            <person name="Ng P."/>
            <person name="Nilsson R."/>
            <person name="Nishiguchi S."/>
            <person name="Nishikawa S."/>
            <person name="Nori F."/>
            <person name="Ohara O."/>
            <person name="Okazaki Y."/>
            <person name="Orlando V."/>
            <person name="Pang K.C."/>
            <person name="Pavan W.J."/>
            <person name="Pavesi G."/>
            <person name="Pesole G."/>
            <person name="Petrovsky N."/>
            <person name="Piazza S."/>
            <person name="Reed J."/>
            <person name="Reid J.F."/>
            <person name="Ring B.Z."/>
            <person name="Ringwald M."/>
            <person name="Rost B."/>
            <person name="Ruan Y."/>
            <person name="Salzberg S.L."/>
            <person name="Sandelin A."/>
            <person name="Schneider C."/>
            <person name="Schoenbach C."/>
            <person name="Sekiguchi K."/>
            <person name="Semple C.A."/>
            <person name="Seno S."/>
            <person name="Sessa L."/>
            <person name="Sheng Y."/>
            <person name="Shibata Y."/>
            <person name="Shimada H."/>
            <person name="Shimada K."/>
            <person name="Silva D."/>
            <person name="Sinclair B."/>
            <person name="Sperling S."/>
            <person name="Stupka E."/>
            <person name="Sugiura K."/>
            <person name="Sultana R."/>
            <person name="Takenaka Y."/>
            <person name="Taki K."/>
            <person name="Tammoja K."/>
            <person name="Tan S.L."/>
            <person name="Tang S."/>
            <person name="Taylor M.S."/>
            <person name="Tegner J."/>
            <person name="Teichmann S.A."/>
            <person name="Ueda H.R."/>
            <person name="van Nimwegen E."/>
            <person name="Verardo R."/>
            <person name="Wei C.L."/>
            <person name="Yagi K."/>
            <person name="Yamanishi H."/>
            <person name="Zabarovsky E."/>
            <person name="Zhu S."/>
            <person name="Zimmer A."/>
            <person name="Hide W."/>
            <person name="Bult C."/>
            <person name="Grimmond S.M."/>
            <person name="Teasdale R.D."/>
            <person name="Liu E.T."/>
            <person name="Brusic V."/>
            <person name="Quackenbush J."/>
            <person name="Wahlestedt C."/>
            <person name="Mattick J.S."/>
            <person name="Hume D.A."/>
            <person name="Kai C."/>
            <person name="Sasaki D."/>
            <person name="Tomaru Y."/>
            <person name="Fukuda S."/>
            <person name="Kanamori-Katayama M."/>
            <person name="Suzuki M."/>
            <person name="Aoki J."/>
            <person name="Arakawa T."/>
            <person name="Iida J."/>
            <person name="Imamura K."/>
            <person name="Itoh M."/>
            <person name="Kato T."/>
            <person name="Kawaji H."/>
            <person name="Kawagashira N."/>
            <person name="Kawashima T."/>
            <person name="Kojima M."/>
            <person name="Kondo S."/>
            <person name="Konno H."/>
            <person name="Nakano K."/>
            <person name="Ninomiya N."/>
            <person name="Nishio T."/>
            <person name="Okada M."/>
            <person name="Plessy C."/>
            <person name="Shibata K."/>
            <person name="Shiraki T."/>
            <person name="Suzuki S."/>
            <person name="Tagami M."/>
            <person name="Waki K."/>
            <person name="Watahiki A."/>
            <person name="Okamura-Oho Y."/>
            <person name="Suzuki H."/>
            <person name="Kawai J."/>
            <person name="Hayashizaki Y."/>
        </authorList>
    </citation>
    <scope>NUCLEOTIDE SEQUENCE [LARGE SCALE MRNA]</scope>
</reference>
<reference key="2">
    <citation type="journal article" date="2004" name="Genome Res.">
        <title>The status, quality, and expansion of the NIH full-length cDNA project: the Mammalian Gene Collection (MGC).</title>
        <authorList>
            <consortium name="The MGC Project Team"/>
        </authorList>
    </citation>
    <scope>NUCLEOTIDE SEQUENCE [LARGE SCALE MRNA]</scope>
    <source>
        <strain>Czech II</strain>
        <tissue>Mammary tumor</tissue>
    </source>
</reference>
<reference key="3">
    <citation type="journal article" date="2004" name="Mol. Cell. Proteomics">
        <title>Phosphoproteomic analysis of the developing mouse brain.</title>
        <authorList>
            <person name="Ballif B.A."/>
            <person name="Villen J."/>
            <person name="Beausoleil S.A."/>
            <person name="Schwartz D."/>
            <person name="Gygi S.P."/>
        </authorList>
    </citation>
    <scope>IDENTIFICATION BY MASS SPECTROMETRY [LARGE SCALE ANALYSIS]</scope>
    <source>
        <tissue>Embryonic brain</tissue>
    </source>
</reference>
<reference key="4">
    <citation type="journal article" date="2007" name="Proc. Natl. Acad. Sci. U.S.A.">
        <title>Large-scale phosphorylation analysis of mouse liver.</title>
        <authorList>
            <person name="Villen J."/>
            <person name="Beausoleil S.A."/>
            <person name="Gerber S.A."/>
            <person name="Gygi S.P."/>
        </authorList>
    </citation>
    <scope>PHOSPHORYLATION [LARGE SCALE ANALYSIS] AT SER-24</scope>
    <scope>IDENTIFICATION BY MASS SPECTROMETRY [LARGE SCALE ANALYSIS]</scope>
    <source>
        <tissue>Liver</tissue>
    </source>
</reference>
<reference key="5">
    <citation type="journal article" date="2008" name="J. Proteome Res.">
        <title>Specific phosphopeptide enrichment with immobilized titanium ion affinity chromatography adsorbent for phosphoproteome analysis.</title>
        <authorList>
            <person name="Zhou H."/>
            <person name="Ye M."/>
            <person name="Dong J."/>
            <person name="Han G."/>
            <person name="Jiang X."/>
            <person name="Wu R."/>
            <person name="Zou H."/>
        </authorList>
    </citation>
    <scope>IDENTIFICATION BY MASS SPECTROMETRY [LARGE SCALE ANALYSIS]</scope>
    <source>
        <tissue>Liver</tissue>
    </source>
</reference>
<reference key="6">
    <citation type="journal article" date="2009" name="Immunity">
        <title>The phagosomal proteome in interferon-gamma-activated macrophages.</title>
        <authorList>
            <person name="Trost M."/>
            <person name="English L."/>
            <person name="Lemieux S."/>
            <person name="Courcelles M."/>
            <person name="Desjardins M."/>
            <person name="Thibault P."/>
        </authorList>
    </citation>
    <scope>PHOSPHORYLATION [LARGE SCALE ANALYSIS] AT SER-24</scope>
    <scope>IDENTIFICATION BY MASS SPECTROMETRY [LARGE SCALE ANALYSIS]</scope>
</reference>
<reference key="7">
    <citation type="journal article" date="2010" name="Cell">
        <title>A tissue-specific atlas of mouse protein phosphorylation and expression.</title>
        <authorList>
            <person name="Huttlin E.L."/>
            <person name="Jedrychowski M.P."/>
            <person name="Elias J.E."/>
            <person name="Goswami T."/>
            <person name="Rad R."/>
            <person name="Beausoleil S.A."/>
            <person name="Villen J."/>
            <person name="Haas W."/>
            <person name="Sowa M.E."/>
            <person name="Gygi S.P."/>
        </authorList>
    </citation>
    <scope>PHOSPHORYLATION [LARGE SCALE ANALYSIS] AT SER-24</scope>
    <scope>IDENTIFICATION BY MASS SPECTROMETRY [LARGE SCALE ANALYSIS]</scope>
    <source>
        <tissue>Brain</tissue>
        <tissue>Brown adipose tissue</tissue>
        <tissue>Heart</tissue>
        <tissue>Kidney</tissue>
        <tissue>Liver</tissue>
        <tissue>Lung</tissue>
        <tissue>Pancreas</tissue>
        <tissue>Spleen</tissue>
        <tissue>Testis</tissue>
    </source>
</reference>
<reference key="8">
    <citation type="journal article" date="2016" name="Nat. Genet.">
        <title>Identification of TMEM230 mutations in familial Parkinson's disease.</title>
        <authorList>
            <person name="Deng H.X."/>
            <person name="Shi Y."/>
            <person name="Yang Y."/>
            <person name="Ahmeti K.B."/>
            <person name="Miller N."/>
            <person name="Huang C."/>
            <person name="Cheng L."/>
            <person name="Zhai H."/>
            <person name="Deng S."/>
            <person name="Nuytemans K."/>
            <person name="Corbett N.J."/>
            <person name="Kim M.J."/>
            <person name="Deng H."/>
            <person name="Tang B."/>
            <person name="Yang Z."/>
            <person name="Xu Y."/>
            <person name="Chan P."/>
            <person name="Huang B."/>
            <person name="Gao X.P."/>
            <person name="Song Z."/>
            <person name="Liu Z."/>
            <person name="Fecto F."/>
            <person name="Siddique N."/>
            <person name="Foroud T."/>
            <person name="Jankovic J."/>
            <person name="Ghetti B."/>
            <person name="Nicholson D.A."/>
            <person name="Krainc D."/>
            <person name="Melen O."/>
            <person name="Vance J.M."/>
            <person name="Pericak-Vance M.A."/>
            <person name="Ma Y.C."/>
            <person name="Rajput A.H."/>
            <person name="Siddique T."/>
        </authorList>
    </citation>
    <scope>TISSUE SPECIFICITY</scope>
    <scope>SUBCELLULAR LOCATION</scope>
</reference>